<dbReference type="EC" id="2.7.7.6" evidence="1"/>
<dbReference type="EMBL" id="AE009948">
    <property type="protein sequence ID" value="AAM99068.1"/>
    <property type="molecule type" value="Genomic_DNA"/>
</dbReference>
<dbReference type="RefSeq" id="NP_687196.1">
    <property type="nucleotide sequence ID" value="NC_004116.1"/>
</dbReference>
<dbReference type="RefSeq" id="WP_000228729.1">
    <property type="nucleotide sequence ID" value="NC_004116.1"/>
</dbReference>
<dbReference type="SMR" id="Q8E238"/>
<dbReference type="STRING" id="208435.SAG0161"/>
<dbReference type="GeneID" id="66885142"/>
<dbReference type="KEGG" id="sag:SAG0161"/>
<dbReference type="PATRIC" id="fig|208435.3.peg.161"/>
<dbReference type="HOGENOM" id="CLU_000524_3_1_9"/>
<dbReference type="OrthoDB" id="9815296at2"/>
<dbReference type="Proteomes" id="UP000000821">
    <property type="component" value="Chromosome"/>
</dbReference>
<dbReference type="GO" id="GO:0000428">
    <property type="term" value="C:DNA-directed RNA polymerase complex"/>
    <property type="evidence" value="ECO:0007669"/>
    <property type="project" value="UniProtKB-KW"/>
</dbReference>
<dbReference type="GO" id="GO:0003677">
    <property type="term" value="F:DNA binding"/>
    <property type="evidence" value="ECO:0007669"/>
    <property type="project" value="UniProtKB-UniRule"/>
</dbReference>
<dbReference type="GO" id="GO:0003899">
    <property type="term" value="F:DNA-directed RNA polymerase activity"/>
    <property type="evidence" value="ECO:0007669"/>
    <property type="project" value="UniProtKB-UniRule"/>
</dbReference>
<dbReference type="GO" id="GO:0000287">
    <property type="term" value="F:magnesium ion binding"/>
    <property type="evidence" value="ECO:0007669"/>
    <property type="project" value="UniProtKB-UniRule"/>
</dbReference>
<dbReference type="GO" id="GO:0008270">
    <property type="term" value="F:zinc ion binding"/>
    <property type="evidence" value="ECO:0007669"/>
    <property type="project" value="UniProtKB-UniRule"/>
</dbReference>
<dbReference type="GO" id="GO:0006351">
    <property type="term" value="P:DNA-templated transcription"/>
    <property type="evidence" value="ECO:0007669"/>
    <property type="project" value="UniProtKB-UniRule"/>
</dbReference>
<dbReference type="CDD" id="cd02655">
    <property type="entry name" value="RNAP_beta'_C"/>
    <property type="match status" value="1"/>
</dbReference>
<dbReference type="CDD" id="cd01609">
    <property type="entry name" value="RNAP_beta'_N"/>
    <property type="match status" value="1"/>
</dbReference>
<dbReference type="FunFam" id="1.10.150.390:FF:000002">
    <property type="entry name" value="DNA-directed RNA polymerase subunit beta"/>
    <property type="match status" value="1"/>
</dbReference>
<dbReference type="FunFam" id="4.10.860.120:FF:000001">
    <property type="entry name" value="DNA-directed RNA polymerase subunit beta"/>
    <property type="match status" value="1"/>
</dbReference>
<dbReference type="Gene3D" id="1.10.132.30">
    <property type="match status" value="1"/>
</dbReference>
<dbReference type="Gene3D" id="1.10.150.390">
    <property type="match status" value="1"/>
</dbReference>
<dbReference type="Gene3D" id="1.10.1790.20">
    <property type="match status" value="1"/>
</dbReference>
<dbReference type="Gene3D" id="1.10.40.90">
    <property type="match status" value="1"/>
</dbReference>
<dbReference type="Gene3D" id="2.40.40.20">
    <property type="match status" value="1"/>
</dbReference>
<dbReference type="Gene3D" id="2.40.50.100">
    <property type="match status" value="1"/>
</dbReference>
<dbReference type="Gene3D" id="4.10.860.120">
    <property type="entry name" value="RNA polymerase II, clamp domain"/>
    <property type="match status" value="1"/>
</dbReference>
<dbReference type="Gene3D" id="1.10.274.100">
    <property type="entry name" value="RNA polymerase Rpb1, domain 3"/>
    <property type="match status" value="1"/>
</dbReference>
<dbReference type="HAMAP" id="MF_01322">
    <property type="entry name" value="RNApol_bact_RpoC"/>
    <property type="match status" value="1"/>
</dbReference>
<dbReference type="InterPro" id="IPR045867">
    <property type="entry name" value="DNA-dir_RpoC_beta_prime"/>
</dbReference>
<dbReference type="InterPro" id="IPR012754">
    <property type="entry name" value="DNA-dir_RpoC_beta_prime_bact"/>
</dbReference>
<dbReference type="InterPro" id="IPR000722">
    <property type="entry name" value="RNA_pol_asu"/>
</dbReference>
<dbReference type="InterPro" id="IPR006592">
    <property type="entry name" value="RNA_pol_N"/>
</dbReference>
<dbReference type="InterPro" id="IPR007080">
    <property type="entry name" value="RNA_pol_Rpb1_1"/>
</dbReference>
<dbReference type="InterPro" id="IPR007066">
    <property type="entry name" value="RNA_pol_Rpb1_3"/>
</dbReference>
<dbReference type="InterPro" id="IPR042102">
    <property type="entry name" value="RNA_pol_Rpb1_3_sf"/>
</dbReference>
<dbReference type="InterPro" id="IPR007083">
    <property type="entry name" value="RNA_pol_Rpb1_4"/>
</dbReference>
<dbReference type="InterPro" id="IPR007081">
    <property type="entry name" value="RNA_pol_Rpb1_5"/>
</dbReference>
<dbReference type="InterPro" id="IPR044893">
    <property type="entry name" value="RNA_pol_Rpb1_clamp_domain"/>
</dbReference>
<dbReference type="InterPro" id="IPR038120">
    <property type="entry name" value="Rpb1_funnel_sf"/>
</dbReference>
<dbReference type="NCBIfam" id="TIGR02386">
    <property type="entry name" value="rpoC_TIGR"/>
    <property type="match status" value="1"/>
</dbReference>
<dbReference type="PANTHER" id="PTHR19376">
    <property type="entry name" value="DNA-DIRECTED RNA POLYMERASE"/>
    <property type="match status" value="1"/>
</dbReference>
<dbReference type="PANTHER" id="PTHR19376:SF54">
    <property type="entry name" value="DNA-DIRECTED RNA POLYMERASE SUBUNIT BETA"/>
    <property type="match status" value="1"/>
</dbReference>
<dbReference type="Pfam" id="PF04997">
    <property type="entry name" value="RNA_pol_Rpb1_1"/>
    <property type="match status" value="1"/>
</dbReference>
<dbReference type="Pfam" id="PF00623">
    <property type="entry name" value="RNA_pol_Rpb1_2"/>
    <property type="match status" value="1"/>
</dbReference>
<dbReference type="Pfam" id="PF04983">
    <property type="entry name" value="RNA_pol_Rpb1_3"/>
    <property type="match status" value="1"/>
</dbReference>
<dbReference type="Pfam" id="PF05000">
    <property type="entry name" value="RNA_pol_Rpb1_4"/>
    <property type="match status" value="1"/>
</dbReference>
<dbReference type="Pfam" id="PF04998">
    <property type="entry name" value="RNA_pol_Rpb1_5"/>
    <property type="match status" value="1"/>
</dbReference>
<dbReference type="SMART" id="SM00663">
    <property type="entry name" value="RPOLA_N"/>
    <property type="match status" value="1"/>
</dbReference>
<dbReference type="SUPFAM" id="SSF64484">
    <property type="entry name" value="beta and beta-prime subunits of DNA dependent RNA-polymerase"/>
    <property type="match status" value="1"/>
</dbReference>
<accession>Q8E238</accession>
<organism>
    <name type="scientific">Streptococcus agalactiae serotype V (strain ATCC BAA-611 / 2603 V/R)</name>
    <dbReference type="NCBI Taxonomy" id="208435"/>
    <lineage>
        <taxon>Bacteria</taxon>
        <taxon>Bacillati</taxon>
        <taxon>Bacillota</taxon>
        <taxon>Bacilli</taxon>
        <taxon>Lactobacillales</taxon>
        <taxon>Streptococcaceae</taxon>
        <taxon>Streptococcus</taxon>
    </lineage>
</organism>
<name>RPOC_STRA5</name>
<gene>
    <name evidence="1" type="primary">rpoC</name>
    <name type="ordered locus">SAG0161</name>
</gene>
<comment type="function">
    <text evidence="1">DNA-dependent RNA polymerase catalyzes the transcription of DNA into RNA using the four ribonucleoside triphosphates as substrates.</text>
</comment>
<comment type="catalytic activity">
    <reaction evidence="1">
        <text>RNA(n) + a ribonucleoside 5'-triphosphate = RNA(n+1) + diphosphate</text>
        <dbReference type="Rhea" id="RHEA:21248"/>
        <dbReference type="Rhea" id="RHEA-COMP:14527"/>
        <dbReference type="Rhea" id="RHEA-COMP:17342"/>
        <dbReference type="ChEBI" id="CHEBI:33019"/>
        <dbReference type="ChEBI" id="CHEBI:61557"/>
        <dbReference type="ChEBI" id="CHEBI:140395"/>
        <dbReference type="EC" id="2.7.7.6"/>
    </reaction>
</comment>
<comment type="cofactor">
    <cofactor evidence="1">
        <name>Mg(2+)</name>
        <dbReference type="ChEBI" id="CHEBI:18420"/>
    </cofactor>
    <text evidence="1">Binds 1 Mg(2+) ion per subunit.</text>
</comment>
<comment type="cofactor">
    <cofactor evidence="1">
        <name>Zn(2+)</name>
        <dbReference type="ChEBI" id="CHEBI:29105"/>
    </cofactor>
    <text evidence="1">Binds 2 Zn(2+) ions per subunit.</text>
</comment>
<comment type="subunit">
    <text evidence="1">The RNAP catalytic core consists of 2 alpha, 1 beta, 1 beta' and 1 omega subunit. When a sigma factor is associated with the core the holoenzyme is formed, which can initiate transcription.</text>
</comment>
<comment type="similarity">
    <text evidence="1">Belongs to the RNA polymerase beta' chain family.</text>
</comment>
<feature type="chain" id="PRO_0000067804" description="DNA-directed RNA polymerase subunit beta'">
    <location>
        <begin position="1"/>
        <end position="1216"/>
    </location>
</feature>
<feature type="binding site" evidence="1">
    <location>
        <position position="60"/>
    </location>
    <ligand>
        <name>Zn(2+)</name>
        <dbReference type="ChEBI" id="CHEBI:29105"/>
        <label>1</label>
    </ligand>
</feature>
<feature type="binding site" evidence="1">
    <location>
        <position position="62"/>
    </location>
    <ligand>
        <name>Zn(2+)</name>
        <dbReference type="ChEBI" id="CHEBI:29105"/>
        <label>1</label>
    </ligand>
</feature>
<feature type="binding site" evidence="1">
    <location>
        <position position="75"/>
    </location>
    <ligand>
        <name>Zn(2+)</name>
        <dbReference type="ChEBI" id="CHEBI:29105"/>
        <label>1</label>
    </ligand>
</feature>
<feature type="binding site" evidence="1">
    <location>
        <position position="78"/>
    </location>
    <ligand>
        <name>Zn(2+)</name>
        <dbReference type="ChEBI" id="CHEBI:29105"/>
        <label>1</label>
    </ligand>
</feature>
<feature type="binding site" evidence="1">
    <location>
        <position position="450"/>
    </location>
    <ligand>
        <name>Mg(2+)</name>
        <dbReference type="ChEBI" id="CHEBI:18420"/>
    </ligand>
</feature>
<feature type="binding site" evidence="1">
    <location>
        <position position="452"/>
    </location>
    <ligand>
        <name>Mg(2+)</name>
        <dbReference type="ChEBI" id="CHEBI:18420"/>
    </ligand>
</feature>
<feature type="binding site" evidence="1">
    <location>
        <position position="454"/>
    </location>
    <ligand>
        <name>Mg(2+)</name>
        <dbReference type="ChEBI" id="CHEBI:18420"/>
    </ligand>
</feature>
<feature type="binding site" evidence="1">
    <location>
        <position position="819"/>
    </location>
    <ligand>
        <name>Zn(2+)</name>
        <dbReference type="ChEBI" id="CHEBI:29105"/>
        <label>2</label>
    </ligand>
</feature>
<feature type="binding site" evidence="1">
    <location>
        <position position="893"/>
    </location>
    <ligand>
        <name>Zn(2+)</name>
        <dbReference type="ChEBI" id="CHEBI:29105"/>
        <label>2</label>
    </ligand>
</feature>
<feature type="binding site" evidence="1">
    <location>
        <position position="900"/>
    </location>
    <ligand>
        <name>Zn(2+)</name>
        <dbReference type="ChEBI" id="CHEBI:29105"/>
        <label>2</label>
    </ligand>
</feature>
<feature type="binding site" evidence="1">
    <location>
        <position position="903"/>
    </location>
    <ligand>
        <name>Zn(2+)</name>
        <dbReference type="ChEBI" id="CHEBI:29105"/>
        <label>2</label>
    </ligand>
</feature>
<proteinExistence type="inferred from homology"/>
<sequence>MVDVNRFKSMQITLASPSKVRSWSYGEVKKPETINYRTLKPEREGLFDEVIFGPTKDWECACGKYKRIRYKGIICDRCGVEVTRAKVRRERMGHIELKAPVSHIWYFKGIPSRMGLTLDMSPRALEEVIYFAAYVVIDPMDTPLEPKSLLTEREYREKLQEYGYGSFVAKMGAEAIQDLLKRVDLDAEIAVLKEELKSATGQKRVKAVRRLDVLDAFKKSGNKPEWMVLNILPVIPPDLRPMVQLDGGRFAASDLNDLYRRVINRNNRLARLLELNAPGIIVQNEKRMLQEAVDALIDNGRRGRPITGPGSRPLKSLSHMLKGKQGRFRQNLLGKRVDFSGRSVIAVGPTLKMYQCGVPREMAIELFKPFVMREIVARDLAGNVKAAKRMVERGDERIWDILEEVIKEHPVLLNRAPTLHRLGIQAFEPVLIDGKALRLHPLVCEAYNADFDGDQMAIHVPLSEEAQAEARLLMLAAEHILNPKDGKPVVTPSQDMVLGNYYLTMEDAGREGEGMIFKDHDEAVMAYQNGYVHLHTRVGIAVDSMPNKPWTEEQKHKIMVTTVGKILFNDIMPEDLPYLIEPNNANLTEKTPDKYFLEPGQDIQAVIDNLEINIPFKKKNLGNIIAETFKRFRTTETSAFLDRLKDLGYYHSTLAGLTVGIADIPVIDNKAEIIDAAHHRVEDINKAFRRGLMTEEDRYVAVTTTWREAKEALEKRLIETQDPKNPIVMMMDSGARGNISNFSQLAGMRGLMAAPNGRIMELPILSNFREGLSVLEMFFSTHGARKGMTDTALKTADSGYLTRRLVDVAQDVIIREDDCGTDRGLTITAITDGKEVTETLEERLIGRYTKKSIKHPETGEILVGADTLITEDMAAKVVKAGVEEVTIRSVFTCNTRHGVCRHCYGINLATGDAVEVGEAVGTIAAQSIGEPGTQLTMRTFHTGGVASNTDITQGLPRIQEIFEARNPKGEAVITEVKGEVVAIEEDSSTRTKKVFVKGQTGEGEYVVPFTARMKVEVGDEVARGAALTEGSIQPKRLLEVRDTLSVETYLLAEVQKVYRSQGVEIGDKHVEVMVRQMLRKVRVMDPGDTDLLPGTLMDISDFTDANKDIVISGGIPATSRPVLMGITKASLETNSFLSAASFQETTRVLTDAAIRGKKDHLLGLKENVIIGKIIPAGTGMARYRNIEPLAVNEVEIIEGTPVDAEVTEVSTPTTED</sequence>
<protein>
    <recommendedName>
        <fullName evidence="1">DNA-directed RNA polymerase subunit beta'</fullName>
        <shortName evidence="1">RNAP subunit beta'</shortName>
        <ecNumber evidence="1">2.7.7.6</ecNumber>
    </recommendedName>
    <alternativeName>
        <fullName evidence="1">RNA polymerase subunit beta'</fullName>
    </alternativeName>
    <alternativeName>
        <fullName evidence="1">Transcriptase subunit beta'</fullName>
    </alternativeName>
</protein>
<keyword id="KW-0240">DNA-directed RNA polymerase</keyword>
<keyword id="KW-0460">Magnesium</keyword>
<keyword id="KW-0479">Metal-binding</keyword>
<keyword id="KW-0548">Nucleotidyltransferase</keyword>
<keyword id="KW-1185">Reference proteome</keyword>
<keyword id="KW-0804">Transcription</keyword>
<keyword id="KW-0808">Transferase</keyword>
<keyword id="KW-0862">Zinc</keyword>
<reference key="1">
    <citation type="journal article" date="2002" name="Proc. Natl. Acad. Sci. U.S.A.">
        <title>Complete genome sequence and comparative genomic analysis of an emerging human pathogen, serotype V Streptococcus agalactiae.</title>
        <authorList>
            <person name="Tettelin H."/>
            <person name="Masignani V."/>
            <person name="Cieslewicz M.J."/>
            <person name="Eisen J.A."/>
            <person name="Peterson S.N."/>
            <person name="Wessels M.R."/>
            <person name="Paulsen I.T."/>
            <person name="Nelson K.E."/>
            <person name="Margarit I."/>
            <person name="Read T.D."/>
            <person name="Madoff L.C."/>
            <person name="Wolf A.M."/>
            <person name="Beanan M.J."/>
            <person name="Brinkac L.M."/>
            <person name="Daugherty S.C."/>
            <person name="DeBoy R.T."/>
            <person name="Durkin A.S."/>
            <person name="Kolonay J.F."/>
            <person name="Madupu R."/>
            <person name="Lewis M.R."/>
            <person name="Radune D."/>
            <person name="Fedorova N.B."/>
            <person name="Scanlan D."/>
            <person name="Khouri H.M."/>
            <person name="Mulligan S."/>
            <person name="Carty H.A."/>
            <person name="Cline R.T."/>
            <person name="Van Aken S.E."/>
            <person name="Gill J."/>
            <person name="Scarselli M."/>
            <person name="Mora M."/>
            <person name="Iacobini E.T."/>
            <person name="Brettoni C."/>
            <person name="Galli G."/>
            <person name="Mariani M."/>
            <person name="Vegni F."/>
            <person name="Maione D."/>
            <person name="Rinaudo D."/>
            <person name="Rappuoli R."/>
            <person name="Telford J.L."/>
            <person name="Kasper D.L."/>
            <person name="Grandi G."/>
            <person name="Fraser C.M."/>
        </authorList>
    </citation>
    <scope>NUCLEOTIDE SEQUENCE [LARGE SCALE GENOMIC DNA]</scope>
    <source>
        <strain>ATCC BAA-611 / 2603 V/R</strain>
    </source>
</reference>
<evidence type="ECO:0000255" key="1">
    <source>
        <dbReference type="HAMAP-Rule" id="MF_01322"/>
    </source>
</evidence>